<organism>
    <name type="scientific">Xylella fastidiosa (strain Temecula1 / ATCC 700964)</name>
    <dbReference type="NCBI Taxonomy" id="183190"/>
    <lineage>
        <taxon>Bacteria</taxon>
        <taxon>Pseudomonadati</taxon>
        <taxon>Pseudomonadota</taxon>
        <taxon>Gammaproteobacteria</taxon>
        <taxon>Lysobacterales</taxon>
        <taxon>Lysobacteraceae</taxon>
        <taxon>Xylella</taxon>
    </lineage>
</organism>
<feature type="chain" id="PRO_0000190196" description="Lipid-A-disaccharide synthase">
    <location>
        <begin position="1"/>
        <end position="385"/>
    </location>
</feature>
<keyword id="KW-0328">Glycosyltransferase</keyword>
<keyword id="KW-0441">Lipid A biosynthesis</keyword>
<keyword id="KW-0444">Lipid biosynthesis</keyword>
<keyword id="KW-0443">Lipid metabolism</keyword>
<keyword id="KW-1185">Reference proteome</keyword>
<keyword id="KW-0808">Transferase</keyword>
<gene>
    <name evidence="1" type="primary">lpxB</name>
    <name type="ordered locus">PD_0322</name>
</gene>
<dbReference type="EC" id="2.4.1.182" evidence="1"/>
<dbReference type="EMBL" id="AE009442">
    <property type="protein sequence ID" value="AAO28206.1"/>
    <property type="molecule type" value="Genomic_DNA"/>
</dbReference>
<dbReference type="SMR" id="Q87EI5"/>
<dbReference type="CAZy" id="GT19">
    <property type="family name" value="Glycosyltransferase Family 19"/>
</dbReference>
<dbReference type="KEGG" id="xft:PD_0322"/>
<dbReference type="HOGENOM" id="CLU_036577_3_0_6"/>
<dbReference type="UniPathway" id="UPA00973"/>
<dbReference type="Proteomes" id="UP000002516">
    <property type="component" value="Chromosome"/>
</dbReference>
<dbReference type="GO" id="GO:0016020">
    <property type="term" value="C:membrane"/>
    <property type="evidence" value="ECO:0007669"/>
    <property type="project" value="GOC"/>
</dbReference>
<dbReference type="GO" id="GO:0008915">
    <property type="term" value="F:lipid-A-disaccharide synthase activity"/>
    <property type="evidence" value="ECO:0007669"/>
    <property type="project" value="UniProtKB-UniRule"/>
</dbReference>
<dbReference type="GO" id="GO:0005543">
    <property type="term" value="F:phospholipid binding"/>
    <property type="evidence" value="ECO:0007669"/>
    <property type="project" value="TreeGrafter"/>
</dbReference>
<dbReference type="GO" id="GO:0009245">
    <property type="term" value="P:lipid A biosynthetic process"/>
    <property type="evidence" value="ECO:0007669"/>
    <property type="project" value="UniProtKB-UniRule"/>
</dbReference>
<dbReference type="CDD" id="cd01635">
    <property type="entry name" value="Glycosyltransferase_GTB-type"/>
    <property type="match status" value="1"/>
</dbReference>
<dbReference type="HAMAP" id="MF_00392">
    <property type="entry name" value="LpxB"/>
    <property type="match status" value="1"/>
</dbReference>
<dbReference type="InterPro" id="IPR003835">
    <property type="entry name" value="Glyco_trans_19"/>
</dbReference>
<dbReference type="NCBIfam" id="TIGR00215">
    <property type="entry name" value="lpxB"/>
    <property type="match status" value="1"/>
</dbReference>
<dbReference type="PANTHER" id="PTHR30372">
    <property type="entry name" value="LIPID-A-DISACCHARIDE SYNTHASE"/>
    <property type="match status" value="1"/>
</dbReference>
<dbReference type="PANTHER" id="PTHR30372:SF4">
    <property type="entry name" value="LIPID-A-DISACCHARIDE SYNTHASE, MITOCHONDRIAL-RELATED"/>
    <property type="match status" value="1"/>
</dbReference>
<dbReference type="Pfam" id="PF02684">
    <property type="entry name" value="LpxB"/>
    <property type="match status" value="1"/>
</dbReference>
<dbReference type="SUPFAM" id="SSF53756">
    <property type="entry name" value="UDP-Glycosyltransferase/glycogen phosphorylase"/>
    <property type="match status" value="1"/>
</dbReference>
<accession>Q87EI5</accession>
<reference key="1">
    <citation type="journal article" date="2003" name="J. Bacteriol.">
        <title>Comparative analyses of the complete genome sequences of Pierce's disease and citrus variegated chlorosis strains of Xylella fastidiosa.</title>
        <authorList>
            <person name="Van Sluys M.A."/>
            <person name="de Oliveira M.C."/>
            <person name="Monteiro-Vitorello C.B."/>
            <person name="Miyaki C.Y."/>
            <person name="Furlan L.R."/>
            <person name="Camargo L.E.A."/>
            <person name="da Silva A.C.R."/>
            <person name="Moon D.H."/>
            <person name="Takita M.A."/>
            <person name="Lemos E.G.M."/>
            <person name="Machado M.A."/>
            <person name="Ferro M.I.T."/>
            <person name="da Silva F.R."/>
            <person name="Goldman M.H.S."/>
            <person name="Goldman G.H."/>
            <person name="Lemos M.V.F."/>
            <person name="El-Dorry H."/>
            <person name="Tsai S.M."/>
            <person name="Carrer H."/>
            <person name="Carraro D.M."/>
            <person name="de Oliveira R.C."/>
            <person name="Nunes L.R."/>
            <person name="Siqueira W.J."/>
            <person name="Coutinho L.L."/>
            <person name="Kimura E.T."/>
            <person name="Ferro E.S."/>
            <person name="Harakava R."/>
            <person name="Kuramae E.E."/>
            <person name="Marino C.L."/>
            <person name="Giglioti E."/>
            <person name="Abreu I.L."/>
            <person name="Alves L.M.C."/>
            <person name="do Amaral A.M."/>
            <person name="Baia G.S."/>
            <person name="Blanco S.R."/>
            <person name="Brito M.S."/>
            <person name="Cannavan F.S."/>
            <person name="Celestino A.V."/>
            <person name="da Cunha A.F."/>
            <person name="Fenille R.C."/>
            <person name="Ferro J.A."/>
            <person name="Formighieri E.F."/>
            <person name="Kishi L.T."/>
            <person name="Leoni S.G."/>
            <person name="Oliveira A.R."/>
            <person name="Rosa V.E. Jr."/>
            <person name="Sassaki F.T."/>
            <person name="Sena J.A.D."/>
            <person name="de Souza A.A."/>
            <person name="Truffi D."/>
            <person name="Tsukumo F."/>
            <person name="Yanai G.M."/>
            <person name="Zaros L.G."/>
            <person name="Civerolo E.L."/>
            <person name="Simpson A.J.G."/>
            <person name="Almeida N.F. Jr."/>
            <person name="Setubal J.C."/>
            <person name="Kitajima J.P."/>
        </authorList>
    </citation>
    <scope>NUCLEOTIDE SEQUENCE [LARGE SCALE GENOMIC DNA]</scope>
    <source>
        <strain>Temecula1 / ATCC 700964</strain>
    </source>
</reference>
<proteinExistence type="inferred from homology"/>
<name>LPXB_XYLFT</name>
<protein>
    <recommendedName>
        <fullName evidence="1">Lipid-A-disaccharide synthase</fullName>
        <ecNumber evidence="1">2.4.1.182</ecNumber>
    </recommendedName>
</protein>
<evidence type="ECO:0000255" key="1">
    <source>
        <dbReference type="HAMAP-Rule" id="MF_00392"/>
    </source>
</evidence>
<comment type="function">
    <text evidence="1">Condensation of UDP-2,3-diacylglucosamine and 2,3-diacylglucosamine-1-phosphate to form lipid A disaccharide, a precursor of lipid A, a phosphorylated glycolipid that anchors the lipopolysaccharide to the outer membrane of the cell.</text>
</comment>
<comment type="catalytic activity">
    <reaction evidence="1">
        <text>a lipid X + a UDP-2-N,3-O-bis[(3R)-3-hydroxyacyl]-alpha-D-glucosamine = a lipid A disaccharide + UDP + H(+)</text>
        <dbReference type="Rhea" id="RHEA:67828"/>
        <dbReference type="ChEBI" id="CHEBI:15378"/>
        <dbReference type="ChEBI" id="CHEBI:58223"/>
        <dbReference type="ChEBI" id="CHEBI:137748"/>
        <dbReference type="ChEBI" id="CHEBI:176338"/>
        <dbReference type="ChEBI" id="CHEBI:176343"/>
        <dbReference type="EC" id="2.4.1.182"/>
    </reaction>
</comment>
<comment type="pathway">
    <text evidence="1">Bacterial outer membrane biogenesis; LPS lipid A biosynthesis.</text>
</comment>
<comment type="similarity">
    <text evidence="1">Belongs to the LpxB family.</text>
</comment>
<sequence>MIQAPRIAIIAGEASGDHLGAGLIQQLRLHFATAEFIGIGGDMMRSAGCQTWFDTSELAVMGLTEVLRHLPRLLKIRREFCKRALAWHPDVLIGIDAPDFNLTVERWFKQRHIRTVHYVSPSIWAWREKRAAKIGASVDRVLCLFPMEPPIYARYGIDARFVGHPMADEIPYQTDRATARTALGLPLLSPVLAVLPGSRHSEISQLGNTFLEAAGQLSEHLPGLHVVIPAANTQCKPLLAEQLSRSTLPVMHSHLLDSSARTAMLAADVVLVASGTATLEAMLLKRPMVVAYKVAPLTYRIVKTLKLLKINRFALPNILAGEDLVPELIQKDCTAPALCAALLDCFKHPQKVTALQNRYLQLHTQLRRNASTRAAEAIAELLQQR</sequence>